<accession>Q9UX04</accession>
<organism>
    <name type="scientific">Saccharolobus solfataricus (strain ATCC 35092 / DSM 1617 / JCM 11322 / P2)</name>
    <name type="common">Sulfolobus solfataricus</name>
    <dbReference type="NCBI Taxonomy" id="273057"/>
    <lineage>
        <taxon>Archaea</taxon>
        <taxon>Thermoproteota</taxon>
        <taxon>Thermoprotei</taxon>
        <taxon>Sulfolobales</taxon>
        <taxon>Sulfolobaceae</taxon>
        <taxon>Saccharolobus</taxon>
    </lineage>
</organism>
<name>PYRDB_SACS2</name>
<feature type="chain" id="PRO_0000148417" description="Dihydroorotate dehydrogenase B (NAD(+)), catalytic subunit">
    <location>
        <begin position="1"/>
        <end position="290"/>
    </location>
</feature>
<feature type="active site" description="Nucleophile">
    <location>
        <position position="120"/>
    </location>
</feature>
<feature type="binding site" evidence="1">
    <location>
        <position position="17"/>
    </location>
    <ligand>
        <name>FMN</name>
        <dbReference type="ChEBI" id="CHEBI:58210"/>
    </ligand>
</feature>
<feature type="binding site" evidence="1">
    <location>
        <begin position="42"/>
        <end position="43"/>
    </location>
    <ligand>
        <name>FMN</name>
        <dbReference type="ChEBI" id="CHEBI:58210"/>
    </ligand>
</feature>
<feature type="binding site" evidence="1">
    <location>
        <position position="42"/>
    </location>
    <ligand>
        <name>substrate</name>
    </ligand>
</feature>
<feature type="binding site" evidence="1">
    <location>
        <begin position="67"/>
        <end position="71"/>
    </location>
    <ligand>
        <name>substrate</name>
    </ligand>
</feature>
<feature type="binding site" evidence="1">
    <location>
        <position position="117"/>
    </location>
    <ligand>
        <name>FMN</name>
        <dbReference type="ChEBI" id="CHEBI:58210"/>
    </ligand>
</feature>
<feature type="binding site" evidence="1">
    <location>
        <position position="117"/>
    </location>
    <ligand>
        <name>substrate</name>
    </ligand>
</feature>
<feature type="binding site" evidence="1">
    <location>
        <position position="152"/>
    </location>
    <ligand>
        <name>FMN</name>
        <dbReference type="ChEBI" id="CHEBI:58210"/>
    </ligand>
</feature>
<feature type="binding site" evidence="1">
    <location>
        <position position="177"/>
    </location>
    <ligand>
        <name>FMN</name>
        <dbReference type="ChEBI" id="CHEBI:58210"/>
    </ligand>
</feature>
<feature type="binding site" evidence="1">
    <location>
        <begin position="178"/>
        <end position="179"/>
    </location>
    <ligand>
        <name>substrate</name>
    </ligand>
</feature>
<feature type="binding site" evidence="1">
    <location>
        <position position="203"/>
    </location>
    <ligand>
        <name>FMN</name>
        <dbReference type="ChEBI" id="CHEBI:58210"/>
    </ligand>
</feature>
<feature type="binding site" evidence="1">
    <location>
        <begin position="229"/>
        <end position="230"/>
    </location>
    <ligand>
        <name>FMN</name>
        <dbReference type="ChEBI" id="CHEBI:58210"/>
    </ligand>
</feature>
<feature type="binding site" evidence="1">
    <location>
        <begin position="251"/>
        <end position="252"/>
    </location>
    <ligand>
        <name>FMN</name>
        <dbReference type="ChEBI" id="CHEBI:58210"/>
    </ligand>
</feature>
<evidence type="ECO:0000250" key="1"/>
<evidence type="ECO:0000305" key="2"/>
<dbReference type="EC" id="1.3.1.14"/>
<dbReference type="EMBL" id="Y18930">
    <property type="protein sequence ID" value="CAB57690.1"/>
    <property type="molecule type" value="Genomic_DNA"/>
</dbReference>
<dbReference type="EMBL" id="AE006641">
    <property type="protein sequence ID" value="AAK40921.1"/>
    <property type="molecule type" value="Genomic_DNA"/>
</dbReference>
<dbReference type="PIR" id="B90208">
    <property type="entry name" value="B90208"/>
</dbReference>
<dbReference type="RefSeq" id="WP_009991136.1">
    <property type="nucleotide sequence ID" value="NC_002754.1"/>
</dbReference>
<dbReference type="SMR" id="Q9UX04"/>
<dbReference type="FunCoup" id="Q9UX04">
    <property type="interactions" value="117"/>
</dbReference>
<dbReference type="STRING" id="273057.SSO0610"/>
<dbReference type="PaxDb" id="273057-SSO0610"/>
<dbReference type="EnsemblBacteria" id="AAK40921">
    <property type="protein sequence ID" value="AAK40921"/>
    <property type="gene ID" value="SSO0610"/>
</dbReference>
<dbReference type="GeneID" id="44129612"/>
<dbReference type="KEGG" id="sso:SSO0610"/>
<dbReference type="PATRIC" id="fig|273057.12.peg.618"/>
<dbReference type="eggNOG" id="arCOG00603">
    <property type="taxonomic scope" value="Archaea"/>
</dbReference>
<dbReference type="HOGENOM" id="CLU_042042_0_1_2"/>
<dbReference type="InParanoid" id="Q9UX04"/>
<dbReference type="PhylomeDB" id="Q9UX04"/>
<dbReference type="UniPathway" id="UPA00070">
    <property type="reaction ID" value="UER00945"/>
</dbReference>
<dbReference type="Proteomes" id="UP000001974">
    <property type="component" value="Chromosome"/>
</dbReference>
<dbReference type="GO" id="GO:0005737">
    <property type="term" value="C:cytoplasm"/>
    <property type="evidence" value="ECO:0000318"/>
    <property type="project" value="GO_Central"/>
</dbReference>
<dbReference type="GO" id="GO:0004589">
    <property type="term" value="F:dihydroorotate dehydrogenase (NAD+) activity"/>
    <property type="evidence" value="ECO:0007669"/>
    <property type="project" value="UniProtKB-EC"/>
</dbReference>
<dbReference type="GO" id="GO:0004152">
    <property type="term" value="F:dihydroorotate dehydrogenase activity"/>
    <property type="evidence" value="ECO:0000318"/>
    <property type="project" value="GO_Central"/>
</dbReference>
<dbReference type="GO" id="GO:0006207">
    <property type="term" value="P:'de novo' pyrimidine nucleobase biosynthetic process"/>
    <property type="evidence" value="ECO:0000318"/>
    <property type="project" value="GO_Central"/>
</dbReference>
<dbReference type="GO" id="GO:0044205">
    <property type="term" value="P:'de novo' UMP biosynthetic process"/>
    <property type="evidence" value="ECO:0007669"/>
    <property type="project" value="UniProtKB-UniRule"/>
</dbReference>
<dbReference type="CDD" id="cd04740">
    <property type="entry name" value="DHOD_1B_like"/>
    <property type="match status" value="1"/>
</dbReference>
<dbReference type="FunFam" id="3.20.20.70:FF:000027">
    <property type="entry name" value="Dihydropyrimidine dehydrogenase [NADP(+)]"/>
    <property type="match status" value="1"/>
</dbReference>
<dbReference type="Gene3D" id="3.20.20.70">
    <property type="entry name" value="Aldolase class I"/>
    <property type="match status" value="1"/>
</dbReference>
<dbReference type="HAMAP" id="MF_00224">
    <property type="entry name" value="DHO_dh_type1"/>
    <property type="match status" value="1"/>
</dbReference>
<dbReference type="InterPro" id="IPR013785">
    <property type="entry name" value="Aldolase_TIM"/>
</dbReference>
<dbReference type="InterPro" id="IPR050074">
    <property type="entry name" value="DHO_dehydrogenase"/>
</dbReference>
<dbReference type="InterPro" id="IPR033888">
    <property type="entry name" value="DHOD_1B"/>
</dbReference>
<dbReference type="InterPro" id="IPR053488">
    <property type="entry name" value="DHODH_Type1"/>
</dbReference>
<dbReference type="InterPro" id="IPR024920">
    <property type="entry name" value="Dihydroorotate_DH_1"/>
</dbReference>
<dbReference type="InterPro" id="IPR012135">
    <property type="entry name" value="Dihydroorotate_DH_1_2"/>
</dbReference>
<dbReference type="InterPro" id="IPR005720">
    <property type="entry name" value="Dihydroorotate_DH_cat"/>
</dbReference>
<dbReference type="InterPro" id="IPR001295">
    <property type="entry name" value="Dihydroorotate_DH_CS"/>
</dbReference>
<dbReference type="NCBIfam" id="NF041011">
    <property type="entry name" value="dihydoor_dh_Arch"/>
    <property type="match status" value="1"/>
</dbReference>
<dbReference type="PANTHER" id="PTHR48109:SF1">
    <property type="entry name" value="DIHYDROOROTATE DEHYDROGENASE (FUMARATE)"/>
    <property type="match status" value="1"/>
</dbReference>
<dbReference type="PANTHER" id="PTHR48109">
    <property type="entry name" value="DIHYDROOROTATE DEHYDROGENASE (QUINONE), MITOCHONDRIAL-RELATED"/>
    <property type="match status" value="1"/>
</dbReference>
<dbReference type="Pfam" id="PF01180">
    <property type="entry name" value="DHO_dh"/>
    <property type="match status" value="1"/>
</dbReference>
<dbReference type="PIRSF" id="PIRSF000164">
    <property type="entry name" value="DHO_oxidase"/>
    <property type="match status" value="1"/>
</dbReference>
<dbReference type="SUPFAM" id="SSF51395">
    <property type="entry name" value="FMN-linked oxidoreductases"/>
    <property type="match status" value="1"/>
</dbReference>
<dbReference type="PROSITE" id="PS00912">
    <property type="entry name" value="DHODEHASE_2"/>
    <property type="match status" value="1"/>
</dbReference>
<reference key="1">
    <citation type="journal article" date="2000" name="Genome">
        <title>Gene content and organization of a 281-kbp contig from the genome of the extremely thermophilic archaeon, Sulfolobus solfataricus P2.</title>
        <authorList>
            <person name="Charlebois R.L."/>
            <person name="Singh R.K."/>
            <person name="Chan-Weiher C.C.-Y."/>
            <person name="Allard G."/>
            <person name="Chow C."/>
            <person name="Confalonieri F."/>
            <person name="Curtis B."/>
            <person name="Duguet M."/>
            <person name="Erauso G."/>
            <person name="Faguy D."/>
            <person name="Gaasterland T."/>
            <person name="Garrett R.A."/>
            <person name="Gordon P."/>
            <person name="Jeffries A.C."/>
            <person name="Kozera C."/>
            <person name="Kushwaha N."/>
            <person name="Lafleur E."/>
            <person name="Medina N."/>
            <person name="Peng X."/>
            <person name="Penny S.L."/>
            <person name="She Q."/>
            <person name="St Jean A."/>
            <person name="van der Oost J."/>
            <person name="Young F."/>
            <person name="Zivanovic Y."/>
            <person name="Doolittle W.F."/>
            <person name="Ragan M.A."/>
            <person name="Sensen C.W."/>
        </authorList>
    </citation>
    <scope>NUCLEOTIDE SEQUENCE [LARGE SCALE GENOMIC DNA]</scope>
    <source>
        <strain>ATCC 35092 / DSM 1617 / JCM 11322 / P2</strain>
    </source>
</reference>
<reference key="2">
    <citation type="journal article" date="2001" name="Proc. Natl. Acad. Sci. U.S.A.">
        <title>The complete genome of the crenarchaeon Sulfolobus solfataricus P2.</title>
        <authorList>
            <person name="She Q."/>
            <person name="Singh R.K."/>
            <person name="Confalonieri F."/>
            <person name="Zivanovic Y."/>
            <person name="Allard G."/>
            <person name="Awayez M.J."/>
            <person name="Chan-Weiher C.C.-Y."/>
            <person name="Clausen I.G."/>
            <person name="Curtis B.A."/>
            <person name="De Moors A."/>
            <person name="Erauso G."/>
            <person name="Fletcher C."/>
            <person name="Gordon P.M.K."/>
            <person name="Heikamp-de Jong I."/>
            <person name="Jeffries A.C."/>
            <person name="Kozera C.J."/>
            <person name="Medina N."/>
            <person name="Peng X."/>
            <person name="Thi-Ngoc H.P."/>
            <person name="Redder P."/>
            <person name="Schenk M.E."/>
            <person name="Theriault C."/>
            <person name="Tolstrup N."/>
            <person name="Charlebois R.L."/>
            <person name="Doolittle W.F."/>
            <person name="Duguet M."/>
            <person name="Gaasterland T."/>
            <person name="Garrett R.A."/>
            <person name="Ragan M.A."/>
            <person name="Sensen C.W."/>
            <person name="Van der Oost J."/>
        </authorList>
    </citation>
    <scope>NUCLEOTIDE SEQUENCE [LARGE SCALE GENOMIC DNA]</scope>
    <source>
        <strain>ATCC 35092 / DSM 1617 / JCM 11322 / P2</strain>
    </source>
</reference>
<proteinExistence type="inferred from homology"/>
<gene>
    <name type="primary">pyrD</name>
    <name type="ordered locus">SSO0610</name>
    <name type="ORF">C08_040</name>
</gene>
<sequence>MITIKNITLNDPLIIASGIIPDVPNYVETICEKYKPSAITTKTVTLNPLEPHKPPTVIKLHDGIYMNAIGLGNPGAKAINEIGVLCPLIVSVGGSSINEIKEVVEVVQSKAKIIEINVSSPNRKGYGESLSKLIGDIIESVKSVTKLPVFVKLGPWDNVIELAGKALEKGADGLTLINTIKGLIIDVETFKPILYYGTGGVSGRCLYPIALRIIKDVYEEYGVDIIGVGGVYDWTDVIGMLAAGAKLVGLGTVLIEKGFSVIEEIRKGLQSYLLEKGLKFEDIIGISVRK</sequence>
<keyword id="KW-0963">Cytoplasm</keyword>
<keyword id="KW-0285">Flavoprotein</keyword>
<keyword id="KW-0288">FMN</keyword>
<keyword id="KW-0520">NAD</keyword>
<keyword id="KW-0560">Oxidoreductase</keyword>
<keyword id="KW-0665">Pyrimidine biosynthesis</keyword>
<keyword id="KW-1185">Reference proteome</keyword>
<comment type="function">
    <text evidence="1">Catalyzes the conversion of dihydroorotate to orotate with NAD(+) as electron acceptor.</text>
</comment>
<comment type="catalytic activity">
    <reaction>
        <text>(S)-dihydroorotate + NAD(+) = orotate + NADH + H(+)</text>
        <dbReference type="Rhea" id="RHEA:13513"/>
        <dbReference type="ChEBI" id="CHEBI:15378"/>
        <dbReference type="ChEBI" id="CHEBI:30839"/>
        <dbReference type="ChEBI" id="CHEBI:30864"/>
        <dbReference type="ChEBI" id="CHEBI:57540"/>
        <dbReference type="ChEBI" id="CHEBI:57945"/>
        <dbReference type="EC" id="1.3.1.14"/>
    </reaction>
</comment>
<comment type="cofactor">
    <cofactor evidence="1">
        <name>FMN</name>
        <dbReference type="ChEBI" id="CHEBI:58210"/>
    </cofactor>
    <text evidence="1">Binds 1 FMN per subunit.</text>
</comment>
<comment type="pathway">
    <text>Pyrimidine metabolism; UMP biosynthesis via de novo pathway; orotate from (S)-dihydroorotate (NAD(+) route): step 1/1.</text>
</comment>
<comment type="subunit">
    <text evidence="1">Heterotetramer of 2 PyrK and 2 PyrD type B subunits.</text>
</comment>
<comment type="subcellular location">
    <subcellularLocation>
        <location evidence="1">Cytoplasm</location>
    </subcellularLocation>
</comment>
<comment type="similarity">
    <text evidence="2">Belongs to the dihydroorotate dehydrogenase family. Type 1 subfamily.</text>
</comment>
<protein>
    <recommendedName>
        <fullName>Dihydroorotate dehydrogenase B (NAD(+)), catalytic subunit</fullName>
        <shortName>DHOD B</shortName>
        <shortName>DHODase B</shortName>
        <shortName>DHOdehase B</shortName>
        <ecNumber>1.3.1.14</ecNumber>
    </recommendedName>
    <alternativeName>
        <fullName>Dihydroorotate oxidase B</fullName>
    </alternativeName>
    <alternativeName>
        <fullName>Orotate reductase (NADH)</fullName>
    </alternativeName>
</protein>